<keyword id="KW-0030">Aminoacyl-tRNA synthetase</keyword>
<keyword id="KW-0067">ATP-binding</keyword>
<keyword id="KW-0963">Cytoplasm</keyword>
<keyword id="KW-0436">Ligase</keyword>
<keyword id="KW-0547">Nucleotide-binding</keyword>
<keyword id="KW-0648">Protein biosynthesis</keyword>
<keyword id="KW-1185">Reference proteome</keyword>
<sequence length="632" mass="71667">MIKDPLGAVKSTFAEEVNRVLRDLGSATRFSPIQVSRVRKDYASYGLPVGFKVAKDLNLDPERAAKTVLDRIDMSRIAYSSDAYAESGYLNLRIDKARFFRDILKLASSEELGRGERKGVVGMVEHTSANPVHPLHVGSGRNAVIGDSFSRILNFLGWDVRRHYLVNDCNLQVAILAAGRSKVRDLIPKGKVDHWFGLIYAISNAFLEIWRIKNGFNSESKIEEWSEVVERIGRMEPELLRIGELSEEEVMSLLREYQRKEGGSVQMFREITESVLRGFVETLERMGITYDSFDRESELIWDGWVDRAIEKLESSGYLKREGKAAYVDLWEAAKGDENVRKVFELSEDDISKLEREGKLGEVIPRKFYLTRSDGTWLYTGTDVAYSLYKFDGLGVSFCYNVIASEQNMEQKGVRACLALMGHDPGKLIHLSYEMVNLVGAAMSGRRGLYITLDEVLDEAKRRVEAILKERGIYDEEICEKVAIGALKYGLISVSPNKVVQFRWERVLNLEENSGPFIQYAYTRALNIIKKAQGVPEDFDPNELKSDAEITIVQMISEFPERVWSAFNLMRPDIIASYANELASQFNKFYEDHPVLSAARPEERAARLNLVNAVKGTLGLAMDLIGIPRLERM</sequence>
<reference key="1">
    <citation type="journal article" date="2008" name="Proc. Natl. Acad. Sci. U.S.A.">
        <title>A korarchaeal genome reveals new insights into the evolution of the Archaea.</title>
        <authorList>
            <person name="Elkins J.G."/>
            <person name="Podar M."/>
            <person name="Graham D.E."/>
            <person name="Makarova K.S."/>
            <person name="Wolf Y."/>
            <person name="Randau L."/>
            <person name="Hedlund B.P."/>
            <person name="Brochier-Armanet C."/>
            <person name="Kunin V."/>
            <person name="Anderson I."/>
            <person name="Lapidus A."/>
            <person name="Goltsman E."/>
            <person name="Barry K."/>
            <person name="Koonin E.V."/>
            <person name="Hugenholtz P."/>
            <person name="Kyrpides N."/>
            <person name="Wanner G."/>
            <person name="Richardson P."/>
            <person name="Keller M."/>
            <person name="Stetter K.O."/>
        </authorList>
    </citation>
    <scope>NUCLEOTIDE SEQUENCE [LARGE SCALE GENOMIC DNA]</scope>
    <source>
        <strain>OPF8</strain>
    </source>
</reference>
<proteinExistence type="inferred from homology"/>
<name>SYR_KORCO</name>
<gene>
    <name evidence="1" type="primary">argS</name>
    <name type="ordered locus">Kcr_0213</name>
</gene>
<accession>B1L3E4</accession>
<protein>
    <recommendedName>
        <fullName evidence="1">Arginine--tRNA ligase</fullName>
        <ecNumber evidence="1">6.1.1.19</ecNumber>
    </recommendedName>
    <alternativeName>
        <fullName evidence="1">Arginyl-tRNA synthetase</fullName>
        <shortName evidence="1">ArgRS</shortName>
    </alternativeName>
</protein>
<organism>
    <name type="scientific">Korarchaeum cryptofilum (strain OPF8)</name>
    <dbReference type="NCBI Taxonomy" id="374847"/>
    <lineage>
        <taxon>Archaea</taxon>
        <taxon>Thermoproteota</taxon>
        <taxon>Candidatus Korarchaeia</taxon>
        <taxon>Candidatus Korarchaeales</taxon>
        <taxon>Candidatus Korarchaeaceae</taxon>
        <taxon>Candidatus Korarchaeum</taxon>
    </lineage>
</organism>
<dbReference type="EC" id="6.1.1.19" evidence="1"/>
<dbReference type="EMBL" id="CP000968">
    <property type="protein sequence ID" value="ACB06973.1"/>
    <property type="molecule type" value="Genomic_DNA"/>
</dbReference>
<dbReference type="RefSeq" id="WP_012308870.1">
    <property type="nucleotide sequence ID" value="NC_010482.1"/>
</dbReference>
<dbReference type="SMR" id="B1L3E4"/>
<dbReference type="FunCoup" id="B1L3E4">
    <property type="interactions" value="195"/>
</dbReference>
<dbReference type="STRING" id="374847.Kcr_0213"/>
<dbReference type="EnsemblBacteria" id="ACB06973">
    <property type="protein sequence ID" value="ACB06973"/>
    <property type="gene ID" value="Kcr_0213"/>
</dbReference>
<dbReference type="GeneID" id="6093502"/>
<dbReference type="KEGG" id="kcr:Kcr_0213"/>
<dbReference type="eggNOG" id="arCOG00487">
    <property type="taxonomic scope" value="Archaea"/>
</dbReference>
<dbReference type="HOGENOM" id="CLU_006406_6_1_2"/>
<dbReference type="InParanoid" id="B1L3E4"/>
<dbReference type="OrthoDB" id="372102at2157"/>
<dbReference type="PhylomeDB" id="B1L3E4"/>
<dbReference type="Proteomes" id="UP000001686">
    <property type="component" value="Chromosome"/>
</dbReference>
<dbReference type="GO" id="GO:0005737">
    <property type="term" value="C:cytoplasm"/>
    <property type="evidence" value="ECO:0007669"/>
    <property type="project" value="UniProtKB-SubCell"/>
</dbReference>
<dbReference type="GO" id="GO:0004814">
    <property type="term" value="F:arginine-tRNA ligase activity"/>
    <property type="evidence" value="ECO:0000318"/>
    <property type="project" value="GO_Central"/>
</dbReference>
<dbReference type="GO" id="GO:0005524">
    <property type="term" value="F:ATP binding"/>
    <property type="evidence" value="ECO:0007669"/>
    <property type="project" value="UniProtKB-UniRule"/>
</dbReference>
<dbReference type="GO" id="GO:0006420">
    <property type="term" value="P:arginyl-tRNA aminoacylation"/>
    <property type="evidence" value="ECO:0000318"/>
    <property type="project" value="GO_Central"/>
</dbReference>
<dbReference type="FunFam" id="1.10.730.10:FF:000175">
    <property type="entry name" value="Arginine--tRNA ligase"/>
    <property type="match status" value="1"/>
</dbReference>
<dbReference type="Gene3D" id="3.30.1360.70">
    <property type="entry name" value="Arginyl tRNA synthetase N-terminal domain"/>
    <property type="match status" value="1"/>
</dbReference>
<dbReference type="Gene3D" id="3.40.50.620">
    <property type="entry name" value="HUPs"/>
    <property type="match status" value="1"/>
</dbReference>
<dbReference type="Gene3D" id="1.10.730.10">
    <property type="entry name" value="Isoleucyl-tRNA Synthetase, Domain 1"/>
    <property type="match status" value="1"/>
</dbReference>
<dbReference type="HAMAP" id="MF_00123">
    <property type="entry name" value="Arg_tRNA_synth"/>
    <property type="match status" value="1"/>
</dbReference>
<dbReference type="InterPro" id="IPR001278">
    <property type="entry name" value="Arg-tRNA-ligase"/>
</dbReference>
<dbReference type="InterPro" id="IPR036695">
    <property type="entry name" value="Arg-tRNA-synth_N_sf"/>
</dbReference>
<dbReference type="InterPro" id="IPR035684">
    <property type="entry name" value="ArgRS_core"/>
</dbReference>
<dbReference type="InterPro" id="IPR008909">
    <property type="entry name" value="DALR_anticod-bd"/>
</dbReference>
<dbReference type="InterPro" id="IPR014729">
    <property type="entry name" value="Rossmann-like_a/b/a_fold"/>
</dbReference>
<dbReference type="InterPro" id="IPR009080">
    <property type="entry name" value="tRNAsynth_Ia_anticodon-bd"/>
</dbReference>
<dbReference type="NCBIfam" id="TIGR00456">
    <property type="entry name" value="argS"/>
    <property type="match status" value="1"/>
</dbReference>
<dbReference type="NCBIfam" id="NF002446">
    <property type="entry name" value="PRK01611.3-3"/>
    <property type="match status" value="1"/>
</dbReference>
<dbReference type="PANTHER" id="PTHR11956:SF5">
    <property type="entry name" value="ARGININE--TRNA LIGASE, CYTOPLASMIC"/>
    <property type="match status" value="1"/>
</dbReference>
<dbReference type="PANTHER" id="PTHR11956">
    <property type="entry name" value="ARGINYL-TRNA SYNTHETASE"/>
    <property type="match status" value="1"/>
</dbReference>
<dbReference type="Pfam" id="PF05746">
    <property type="entry name" value="DALR_1"/>
    <property type="match status" value="1"/>
</dbReference>
<dbReference type="Pfam" id="PF00750">
    <property type="entry name" value="tRNA-synt_1d"/>
    <property type="match status" value="2"/>
</dbReference>
<dbReference type="PRINTS" id="PR01038">
    <property type="entry name" value="TRNASYNTHARG"/>
</dbReference>
<dbReference type="SMART" id="SM00836">
    <property type="entry name" value="DALR_1"/>
    <property type="match status" value="1"/>
</dbReference>
<dbReference type="SUPFAM" id="SSF47323">
    <property type="entry name" value="Anticodon-binding domain of a subclass of class I aminoacyl-tRNA synthetases"/>
    <property type="match status" value="1"/>
</dbReference>
<dbReference type="SUPFAM" id="SSF52374">
    <property type="entry name" value="Nucleotidylyl transferase"/>
    <property type="match status" value="1"/>
</dbReference>
<comment type="catalytic activity">
    <reaction evidence="1">
        <text>tRNA(Arg) + L-arginine + ATP = L-arginyl-tRNA(Arg) + AMP + diphosphate</text>
        <dbReference type="Rhea" id="RHEA:20301"/>
        <dbReference type="Rhea" id="RHEA-COMP:9658"/>
        <dbReference type="Rhea" id="RHEA-COMP:9673"/>
        <dbReference type="ChEBI" id="CHEBI:30616"/>
        <dbReference type="ChEBI" id="CHEBI:32682"/>
        <dbReference type="ChEBI" id="CHEBI:33019"/>
        <dbReference type="ChEBI" id="CHEBI:78442"/>
        <dbReference type="ChEBI" id="CHEBI:78513"/>
        <dbReference type="ChEBI" id="CHEBI:456215"/>
        <dbReference type="EC" id="6.1.1.19"/>
    </reaction>
</comment>
<comment type="subcellular location">
    <subcellularLocation>
        <location evidence="1">Cytoplasm</location>
    </subcellularLocation>
</comment>
<comment type="similarity">
    <text evidence="1">Belongs to the class-I aminoacyl-tRNA synthetase family.</text>
</comment>
<feature type="chain" id="PRO_1000095374" description="Arginine--tRNA ligase">
    <location>
        <begin position="1"/>
        <end position="632"/>
    </location>
</feature>
<feature type="short sequence motif" description="'HIGH' region">
    <location>
        <begin position="129"/>
        <end position="139"/>
    </location>
</feature>
<evidence type="ECO:0000255" key="1">
    <source>
        <dbReference type="HAMAP-Rule" id="MF_00123"/>
    </source>
</evidence>